<keyword id="KW-0210">Decarboxylase</keyword>
<keyword id="KW-0456">Lyase</keyword>
<keyword id="KW-0670">Pyruvate</keyword>
<keyword id="KW-1185">Reference proteome</keyword>
<name>PDAD_CHLTE</name>
<accession>Q8KEX0</accession>
<proteinExistence type="inferred from homology"/>
<sequence>MSFVPTKVFFTKGVGRHKEYLSSFELALRDAKIEKCNLVTVSSIFPPKCERISVEEGLKHLKPGQITFAVMARNSTNENNRLISASVGVALPADESQYGYLSEHHPYGETAEQSGEYAEDLAATMLATTLGIEFDPNKDWDEREGIYKMSGKIVNSFNITESAEGETGMWTTVISCAVLLP</sequence>
<protein>
    <recommendedName>
        <fullName evidence="1">Probable pyruvoyl-dependent arginine decarboxylase</fullName>
        <shortName evidence="1">PvlArgDC</shortName>
        <ecNumber evidence="1">4.1.1.19</ecNumber>
    </recommendedName>
    <component>
        <recommendedName>
            <fullName evidence="1">Pyruvoyl-dependent arginine decarboxylase subunit beta</fullName>
        </recommendedName>
    </component>
    <component>
        <recommendedName>
            <fullName evidence="1">Pyruvoyl-dependent arginine decarboxylase subunit alpha</fullName>
        </recommendedName>
    </component>
</protein>
<dbReference type="EC" id="4.1.1.19" evidence="1"/>
<dbReference type="EMBL" id="AE006470">
    <property type="protein sequence ID" value="AAM71804.1"/>
    <property type="molecule type" value="Genomic_DNA"/>
</dbReference>
<dbReference type="RefSeq" id="NP_661462.1">
    <property type="nucleotide sequence ID" value="NC_002932.3"/>
</dbReference>
<dbReference type="RefSeq" id="WP_010932249.1">
    <property type="nucleotide sequence ID" value="NC_002932.3"/>
</dbReference>
<dbReference type="SMR" id="Q8KEX0"/>
<dbReference type="STRING" id="194439.CT0562"/>
<dbReference type="EnsemblBacteria" id="AAM71804">
    <property type="protein sequence ID" value="AAM71804"/>
    <property type="gene ID" value="CT0562"/>
</dbReference>
<dbReference type="KEGG" id="cte:CT0562"/>
<dbReference type="PATRIC" id="fig|194439.7.peg.526"/>
<dbReference type="eggNOG" id="COG1945">
    <property type="taxonomic scope" value="Bacteria"/>
</dbReference>
<dbReference type="HOGENOM" id="CLU_114389_0_0_10"/>
<dbReference type="OrthoDB" id="9783061at2"/>
<dbReference type="Proteomes" id="UP000001007">
    <property type="component" value="Chromosome"/>
</dbReference>
<dbReference type="GO" id="GO:0008792">
    <property type="term" value="F:arginine decarboxylase activity"/>
    <property type="evidence" value="ECO:0007669"/>
    <property type="project" value="UniProtKB-UniRule"/>
</dbReference>
<dbReference type="GO" id="GO:0006527">
    <property type="term" value="P:arginine catabolic process"/>
    <property type="evidence" value="ECO:0007669"/>
    <property type="project" value="InterPro"/>
</dbReference>
<dbReference type="Gene3D" id="3.30.60.30">
    <property type="match status" value="1"/>
</dbReference>
<dbReference type="Gene3D" id="3.50.20.10">
    <property type="entry name" value="Pyruvoyl-Dependent Histidine Decarboxylase, subunit B"/>
    <property type="match status" value="1"/>
</dbReference>
<dbReference type="HAMAP" id="MF_01404">
    <property type="entry name" value="PvlArgDC"/>
    <property type="match status" value="1"/>
</dbReference>
<dbReference type="InterPro" id="IPR016104">
    <property type="entry name" value="Pyr-dep_his/arg-deCO2ase"/>
</dbReference>
<dbReference type="InterPro" id="IPR016105">
    <property type="entry name" value="Pyr-dep_his/arg-deCO2ase_sand"/>
</dbReference>
<dbReference type="InterPro" id="IPR002724">
    <property type="entry name" value="Pyruvoyl-dep_arg_deCO2ase"/>
</dbReference>
<dbReference type="NCBIfam" id="NF009064">
    <property type="entry name" value="PRK12398.1"/>
    <property type="match status" value="1"/>
</dbReference>
<dbReference type="NCBIfam" id="TIGR00286">
    <property type="entry name" value="pyruvoyl-dependent arginine decarboxylase"/>
    <property type="match status" value="1"/>
</dbReference>
<dbReference type="PANTHER" id="PTHR40438">
    <property type="entry name" value="PYRUVOYL-DEPENDENT ARGININE DECARBOXYLASE"/>
    <property type="match status" value="1"/>
</dbReference>
<dbReference type="PANTHER" id="PTHR40438:SF1">
    <property type="entry name" value="PYRUVOYL-DEPENDENT ARGININE DECARBOXYLASE"/>
    <property type="match status" value="1"/>
</dbReference>
<dbReference type="Pfam" id="PF01862">
    <property type="entry name" value="PvlArgDC"/>
    <property type="match status" value="1"/>
</dbReference>
<dbReference type="PIRSF" id="PIRSF005216">
    <property type="entry name" value="Pyruvoyl-dep_arg_deCO2ase"/>
    <property type="match status" value="1"/>
</dbReference>
<dbReference type="SFLD" id="SFLDG01170">
    <property type="entry name" value="Pyruvoyl-dependent_arginine_de"/>
    <property type="match status" value="1"/>
</dbReference>
<dbReference type="SFLD" id="SFLDS00055">
    <property type="entry name" value="Pyruvoyl-Dependent_Histidine/A"/>
    <property type="match status" value="1"/>
</dbReference>
<dbReference type="SUPFAM" id="SSF56271">
    <property type="entry name" value="Pyruvoyl-dependent histidine and arginine decarboxylases"/>
    <property type="match status" value="1"/>
</dbReference>
<organism>
    <name type="scientific">Chlorobaculum tepidum (strain ATCC 49652 / DSM 12025 / NBRC 103806 / TLS)</name>
    <name type="common">Chlorobium tepidum</name>
    <dbReference type="NCBI Taxonomy" id="194439"/>
    <lineage>
        <taxon>Bacteria</taxon>
        <taxon>Pseudomonadati</taxon>
        <taxon>Chlorobiota</taxon>
        <taxon>Chlorobiia</taxon>
        <taxon>Chlorobiales</taxon>
        <taxon>Chlorobiaceae</taxon>
        <taxon>Chlorobaculum</taxon>
    </lineage>
</organism>
<feature type="chain" id="PRO_0000023340" description="Pyruvoyl-dependent arginine decarboxylase subunit beta" evidence="1">
    <location>
        <begin position="1"/>
        <end position="42"/>
    </location>
</feature>
<feature type="chain" id="PRO_0000023341" description="Pyruvoyl-dependent arginine decarboxylase subunit alpha" evidence="1">
    <location>
        <begin position="43"/>
        <end position="181"/>
    </location>
</feature>
<feature type="site" description="Cleavage (non-hydrolytic)" evidence="1">
    <location>
        <begin position="42"/>
        <end position="43"/>
    </location>
</feature>
<feature type="modified residue" description="Pyruvic acid (Ser)" evidence="1">
    <location>
        <position position="43"/>
    </location>
</feature>
<gene>
    <name evidence="1" type="primary">pdaD</name>
    <name type="ordered locus">CT0562</name>
</gene>
<reference key="1">
    <citation type="journal article" date="2002" name="Proc. Natl. Acad. Sci. U.S.A.">
        <title>The complete genome sequence of Chlorobium tepidum TLS, a photosynthetic, anaerobic, green-sulfur bacterium.</title>
        <authorList>
            <person name="Eisen J.A."/>
            <person name="Nelson K.E."/>
            <person name="Paulsen I.T."/>
            <person name="Heidelberg J.F."/>
            <person name="Wu M."/>
            <person name="Dodson R.J."/>
            <person name="DeBoy R.T."/>
            <person name="Gwinn M.L."/>
            <person name="Nelson W.C."/>
            <person name="Haft D.H."/>
            <person name="Hickey E.K."/>
            <person name="Peterson J.D."/>
            <person name="Durkin A.S."/>
            <person name="Kolonay J.F."/>
            <person name="Yang F."/>
            <person name="Holt I.E."/>
            <person name="Umayam L.A."/>
            <person name="Mason T.M."/>
            <person name="Brenner M."/>
            <person name="Shea T.P."/>
            <person name="Parksey D.S."/>
            <person name="Nierman W.C."/>
            <person name="Feldblyum T.V."/>
            <person name="Hansen C.L."/>
            <person name="Craven M.B."/>
            <person name="Radune D."/>
            <person name="Vamathevan J.J."/>
            <person name="Khouri H.M."/>
            <person name="White O."/>
            <person name="Gruber T.M."/>
            <person name="Ketchum K.A."/>
            <person name="Venter J.C."/>
            <person name="Tettelin H."/>
            <person name="Bryant D.A."/>
            <person name="Fraser C.M."/>
        </authorList>
    </citation>
    <scope>NUCLEOTIDE SEQUENCE [LARGE SCALE GENOMIC DNA]</scope>
    <source>
        <strain>ATCC 49652 / DSM 12025 / NBRC 103806 / TLS</strain>
    </source>
</reference>
<comment type="catalytic activity">
    <reaction evidence="1">
        <text>L-arginine + H(+) = agmatine + CO2</text>
        <dbReference type="Rhea" id="RHEA:17641"/>
        <dbReference type="ChEBI" id="CHEBI:15378"/>
        <dbReference type="ChEBI" id="CHEBI:16526"/>
        <dbReference type="ChEBI" id="CHEBI:32682"/>
        <dbReference type="ChEBI" id="CHEBI:58145"/>
        <dbReference type="EC" id="4.1.1.19"/>
    </reaction>
</comment>
<comment type="cofactor">
    <cofactor evidence="1">
        <name>pyruvate</name>
        <dbReference type="ChEBI" id="CHEBI:15361"/>
    </cofactor>
    <text evidence="1">Binds 1 pyruvoyl group covalently per subunit.</text>
</comment>
<comment type="similarity">
    <text evidence="1">Belongs to the PdaD family.</text>
</comment>
<evidence type="ECO:0000255" key="1">
    <source>
        <dbReference type="HAMAP-Rule" id="MF_01404"/>
    </source>
</evidence>